<organism>
    <name type="scientific">Leptospira borgpetersenii serovar Hardjo-bovis (strain JB197)</name>
    <dbReference type="NCBI Taxonomy" id="355277"/>
    <lineage>
        <taxon>Bacteria</taxon>
        <taxon>Pseudomonadati</taxon>
        <taxon>Spirochaetota</taxon>
        <taxon>Spirochaetia</taxon>
        <taxon>Leptospirales</taxon>
        <taxon>Leptospiraceae</taxon>
        <taxon>Leptospira</taxon>
    </lineage>
</organism>
<evidence type="ECO:0000255" key="1">
    <source>
        <dbReference type="HAMAP-Rule" id="MF_01212"/>
    </source>
</evidence>
<evidence type="ECO:0000255" key="2">
    <source>
        <dbReference type="PROSITE-ProRule" id="PRU01175"/>
    </source>
</evidence>
<keyword id="KW-0378">Hydrolase</keyword>
<comment type="similarity">
    <text evidence="1">Belongs to the dGTPase family. Type 2 subfamily.</text>
</comment>
<name>DGTL1_LEPBJ</name>
<reference key="1">
    <citation type="journal article" date="2006" name="Proc. Natl. Acad. Sci. U.S.A.">
        <title>Genome reduction in Leptospira borgpetersenii reflects limited transmission potential.</title>
        <authorList>
            <person name="Bulach D.M."/>
            <person name="Zuerner R.L."/>
            <person name="Wilson P."/>
            <person name="Seemann T."/>
            <person name="McGrath A."/>
            <person name="Cullen P.A."/>
            <person name="Davis J."/>
            <person name="Johnson M."/>
            <person name="Kuczek E."/>
            <person name="Alt D.P."/>
            <person name="Peterson-Burch B."/>
            <person name="Coppel R.L."/>
            <person name="Rood J.I."/>
            <person name="Davies J.K."/>
            <person name="Adler B."/>
        </authorList>
    </citation>
    <scope>NUCLEOTIDE SEQUENCE [LARGE SCALE GENOMIC DNA]</scope>
    <source>
        <strain>JB197</strain>
    </source>
</reference>
<proteinExistence type="inferred from homology"/>
<sequence length="381" mass="44304">MYFSRNDLIQKEIAGLAPYAISSTNNGGRFYEEEEHSYRLPFQRDRDRVLHSSAFKRLQYKTQVFIFSVGENYRNRMTHTLEVAGLSRTIASALGLNSHLSESIALAHDLGHTPFGHAGQEILSSLMKDHGGFEHNKQSLRIVTSIEKKYPNFPGLNLCRETLKGLMKHGTEYDPSMMLLERKESGPSLEGMIADLSDEIAYTSHDIEDGWEMGYLHLGDLSENPFWKEVYEECKEQYKDVGEKILVRTAIRTLTNSMVSDLIQNISLQLETNQVKSTEDLIRLWKQGIRIASFSERVDSKFRELKFFLYEKLYRHEDLVRMSDYGKKVIESLFDYFLKHPEKIPDTYKERIEEESLYRVISDYVAGMTDRYAEKIYQSLH</sequence>
<feature type="chain" id="PRO_1000066418" description="Deoxyguanosinetriphosphate triphosphohydrolase-like protein">
    <location>
        <begin position="1"/>
        <end position="381"/>
    </location>
</feature>
<feature type="domain" description="HD" evidence="2">
    <location>
        <begin position="76"/>
        <end position="203"/>
    </location>
</feature>
<gene>
    <name type="ordered locus">LBJ_1337</name>
</gene>
<accession>Q04T48</accession>
<protein>
    <recommendedName>
        <fullName evidence="1">Deoxyguanosinetriphosphate triphosphohydrolase-like protein</fullName>
    </recommendedName>
</protein>
<dbReference type="EMBL" id="CP000350">
    <property type="protein sequence ID" value="ABJ75922.1"/>
    <property type="molecule type" value="Genomic_DNA"/>
</dbReference>
<dbReference type="RefSeq" id="WP_011670201.1">
    <property type="nucleotide sequence ID" value="NC_008510.1"/>
</dbReference>
<dbReference type="SMR" id="Q04T48"/>
<dbReference type="KEGG" id="lbj:LBJ_1337"/>
<dbReference type="HOGENOM" id="CLU_028163_1_0_12"/>
<dbReference type="Proteomes" id="UP000000656">
    <property type="component" value="Chromosome 1"/>
</dbReference>
<dbReference type="GO" id="GO:0016793">
    <property type="term" value="F:triphosphoric monoester hydrolase activity"/>
    <property type="evidence" value="ECO:0007669"/>
    <property type="project" value="InterPro"/>
</dbReference>
<dbReference type="CDD" id="cd00077">
    <property type="entry name" value="HDc"/>
    <property type="match status" value="1"/>
</dbReference>
<dbReference type="FunFam" id="1.10.3210.10:FF:000024">
    <property type="entry name" value="Deoxyguanosinetriphosphate triphosphohydrolase-like protein"/>
    <property type="match status" value="1"/>
</dbReference>
<dbReference type="Gene3D" id="1.10.3210.10">
    <property type="entry name" value="Hypothetical protein af1432"/>
    <property type="match status" value="1"/>
</dbReference>
<dbReference type="HAMAP" id="MF_01212">
    <property type="entry name" value="dGTPase_type2"/>
    <property type="match status" value="1"/>
</dbReference>
<dbReference type="InterPro" id="IPR006261">
    <property type="entry name" value="dGTPase"/>
</dbReference>
<dbReference type="InterPro" id="IPR051094">
    <property type="entry name" value="Diverse_Catalytic_Enzymes"/>
</dbReference>
<dbReference type="InterPro" id="IPR023023">
    <property type="entry name" value="dNTPase_2"/>
</dbReference>
<dbReference type="InterPro" id="IPR003607">
    <property type="entry name" value="HD/PDEase_dom"/>
</dbReference>
<dbReference type="InterPro" id="IPR006674">
    <property type="entry name" value="HD_domain"/>
</dbReference>
<dbReference type="InterPro" id="IPR026875">
    <property type="entry name" value="PHydrolase_assoc_dom"/>
</dbReference>
<dbReference type="NCBIfam" id="TIGR01353">
    <property type="entry name" value="dGTP_triPase"/>
    <property type="match status" value="1"/>
</dbReference>
<dbReference type="NCBIfam" id="NF002326">
    <property type="entry name" value="PRK01286.1-1"/>
    <property type="match status" value="1"/>
</dbReference>
<dbReference type="PANTHER" id="PTHR35795:SF1">
    <property type="entry name" value="BIS(5'-NUCLEOSYL)-TETRAPHOSPHATASE, SYMMETRICAL"/>
    <property type="match status" value="1"/>
</dbReference>
<dbReference type="PANTHER" id="PTHR35795">
    <property type="entry name" value="SLR1885 PROTEIN"/>
    <property type="match status" value="1"/>
</dbReference>
<dbReference type="Pfam" id="PF01966">
    <property type="entry name" value="HD"/>
    <property type="match status" value="1"/>
</dbReference>
<dbReference type="Pfam" id="PF13286">
    <property type="entry name" value="HD_assoc"/>
    <property type="match status" value="1"/>
</dbReference>
<dbReference type="SMART" id="SM00471">
    <property type="entry name" value="HDc"/>
    <property type="match status" value="1"/>
</dbReference>
<dbReference type="SUPFAM" id="SSF109604">
    <property type="entry name" value="HD-domain/PDEase-like"/>
    <property type="match status" value="1"/>
</dbReference>
<dbReference type="PROSITE" id="PS51831">
    <property type="entry name" value="HD"/>
    <property type="match status" value="1"/>
</dbReference>